<proteinExistence type="inferred from homology"/>
<evidence type="ECO:0000250" key="1"/>
<evidence type="ECO:0000256" key="2">
    <source>
        <dbReference type="SAM" id="MobiDB-lite"/>
    </source>
</evidence>
<evidence type="ECO:0000305" key="3"/>
<gene>
    <name type="primary">ESF2</name>
    <name type="ORF">SNOG_07182</name>
</gene>
<keyword id="KW-0539">Nucleus</keyword>
<keyword id="KW-0690">Ribosome biogenesis</keyword>
<keyword id="KW-0694">RNA-binding</keyword>
<keyword id="KW-0698">rRNA processing</keyword>
<feature type="chain" id="PRO_0000285377" description="Pre-rRNA-processing protein ESF2">
    <location>
        <begin position="1"/>
        <end position="326"/>
    </location>
</feature>
<feature type="domain" description="RRM">
    <location>
        <begin position="118"/>
        <end position="208"/>
    </location>
</feature>
<feature type="region of interest" description="Disordered" evidence="2">
    <location>
        <begin position="1"/>
        <end position="77"/>
    </location>
</feature>
<feature type="region of interest" description="Disordered" evidence="2">
    <location>
        <begin position="266"/>
        <end position="326"/>
    </location>
</feature>
<feature type="compositionally biased region" description="Acidic residues" evidence="2">
    <location>
        <begin position="11"/>
        <end position="20"/>
    </location>
</feature>
<feature type="compositionally biased region" description="Basic and acidic residues" evidence="2">
    <location>
        <begin position="21"/>
        <end position="30"/>
    </location>
</feature>
<feature type="compositionally biased region" description="Acidic residues" evidence="2">
    <location>
        <begin position="45"/>
        <end position="77"/>
    </location>
</feature>
<feature type="compositionally biased region" description="Basic and acidic residues" evidence="2">
    <location>
        <begin position="266"/>
        <end position="290"/>
    </location>
</feature>
<reference key="1">
    <citation type="journal article" date="2007" name="Plant Cell">
        <title>Dothideomycete-plant interactions illuminated by genome sequencing and EST analysis of the wheat pathogen Stagonospora nodorum.</title>
        <authorList>
            <person name="Hane J.K."/>
            <person name="Lowe R.G.T."/>
            <person name="Solomon P.S."/>
            <person name="Tan K.-C."/>
            <person name="Schoch C.L."/>
            <person name="Spatafora J.W."/>
            <person name="Crous P.W."/>
            <person name="Kodira C.D."/>
            <person name="Birren B.W."/>
            <person name="Galagan J.E."/>
            <person name="Torriani S.F.F."/>
            <person name="McDonald B.A."/>
            <person name="Oliver R.P."/>
        </authorList>
    </citation>
    <scope>NUCLEOTIDE SEQUENCE [LARGE SCALE GENOMIC DNA]</scope>
    <source>
        <strain>SN15 / ATCC MYA-4574 / FGSC 10173</strain>
    </source>
</reference>
<dbReference type="EMBL" id="CH445334">
    <property type="protein sequence ID" value="EAT85833.1"/>
    <property type="molecule type" value="Genomic_DNA"/>
</dbReference>
<dbReference type="RefSeq" id="XP_001797535.1">
    <property type="nucleotide sequence ID" value="XM_001797483.1"/>
</dbReference>
<dbReference type="FunCoup" id="Q0UM32">
    <property type="interactions" value="856"/>
</dbReference>
<dbReference type="STRING" id="321614.Q0UM32"/>
<dbReference type="EnsemblFungi" id="SNOT_07182">
    <property type="protein sequence ID" value="SNOT_07182"/>
    <property type="gene ID" value="SNOG_07182"/>
</dbReference>
<dbReference type="GeneID" id="5974425"/>
<dbReference type="KEGG" id="pno:SNOG_07182"/>
<dbReference type="VEuPathDB" id="FungiDB:JI435_071820"/>
<dbReference type="eggNOG" id="KOG3152">
    <property type="taxonomic scope" value="Eukaryota"/>
</dbReference>
<dbReference type="HOGENOM" id="CLU_054086_0_1_1"/>
<dbReference type="InParanoid" id="Q0UM32"/>
<dbReference type="OMA" id="TRKHNDF"/>
<dbReference type="OrthoDB" id="287393at2759"/>
<dbReference type="Proteomes" id="UP000001055">
    <property type="component" value="Unassembled WGS sequence"/>
</dbReference>
<dbReference type="GO" id="GO:0005730">
    <property type="term" value="C:nucleolus"/>
    <property type="evidence" value="ECO:0000318"/>
    <property type="project" value="GO_Central"/>
</dbReference>
<dbReference type="GO" id="GO:0003723">
    <property type="term" value="F:RNA binding"/>
    <property type="evidence" value="ECO:0000318"/>
    <property type="project" value="GO_Central"/>
</dbReference>
<dbReference type="GO" id="GO:0000480">
    <property type="term" value="P:endonucleolytic cleavage in 5'-ETS of tricistronic rRNA transcript (SSU-rRNA, 5.8S rRNA, LSU-rRNA)"/>
    <property type="evidence" value="ECO:0000318"/>
    <property type="project" value="GO_Central"/>
</dbReference>
<dbReference type="GO" id="GO:0000447">
    <property type="term" value="P:endonucleolytic cleavage in ITS1 to separate SSU-rRNA from 5.8S rRNA and LSU-rRNA from tricistronic rRNA transcript (SSU-rRNA, 5.8S rRNA, LSU-rRNA)"/>
    <property type="evidence" value="ECO:0000318"/>
    <property type="project" value="GO_Central"/>
</dbReference>
<dbReference type="GO" id="GO:0000472">
    <property type="term" value="P:endonucleolytic cleavage to generate mature 5'-end of SSU-rRNA from (SSU-rRNA, 5.8S rRNA, LSU-rRNA)"/>
    <property type="evidence" value="ECO:0000318"/>
    <property type="project" value="GO_Central"/>
</dbReference>
<dbReference type="GO" id="GO:0034462">
    <property type="term" value="P:small-subunit processome assembly"/>
    <property type="evidence" value="ECO:0000318"/>
    <property type="project" value="GO_Central"/>
</dbReference>
<dbReference type="CDD" id="cd12263">
    <property type="entry name" value="RRM_ABT1_like"/>
    <property type="match status" value="1"/>
</dbReference>
<dbReference type="FunFam" id="3.30.70.330:FF:001147">
    <property type="entry name" value="Pre-rRNA-processing protein esf-2"/>
    <property type="match status" value="1"/>
</dbReference>
<dbReference type="Gene3D" id="3.30.70.330">
    <property type="match status" value="1"/>
</dbReference>
<dbReference type="InterPro" id="IPR039119">
    <property type="entry name" value="ABT1/Esf2"/>
</dbReference>
<dbReference type="InterPro" id="IPR034353">
    <property type="entry name" value="ABT1/ESF2_RRM"/>
</dbReference>
<dbReference type="InterPro" id="IPR012677">
    <property type="entry name" value="Nucleotide-bd_a/b_plait_sf"/>
</dbReference>
<dbReference type="InterPro" id="IPR035979">
    <property type="entry name" value="RBD_domain_sf"/>
</dbReference>
<dbReference type="PANTHER" id="PTHR12311">
    <property type="entry name" value="ACTIVATOR OF BASAL TRANSCRIPTION 1"/>
    <property type="match status" value="1"/>
</dbReference>
<dbReference type="PANTHER" id="PTHR12311:SF7">
    <property type="entry name" value="ACTIVATOR OF BASAL TRANSCRIPTION 1"/>
    <property type="match status" value="1"/>
</dbReference>
<dbReference type="SUPFAM" id="SSF54928">
    <property type="entry name" value="RNA-binding domain, RBD"/>
    <property type="match status" value="1"/>
</dbReference>
<organism>
    <name type="scientific">Phaeosphaeria nodorum (strain SN15 / ATCC MYA-4574 / FGSC 10173)</name>
    <name type="common">Glume blotch fungus</name>
    <name type="synonym">Parastagonospora nodorum</name>
    <dbReference type="NCBI Taxonomy" id="321614"/>
    <lineage>
        <taxon>Eukaryota</taxon>
        <taxon>Fungi</taxon>
        <taxon>Dikarya</taxon>
        <taxon>Ascomycota</taxon>
        <taxon>Pezizomycotina</taxon>
        <taxon>Dothideomycetes</taxon>
        <taxon>Pleosporomycetidae</taxon>
        <taxon>Pleosporales</taxon>
        <taxon>Pleosporineae</taxon>
        <taxon>Phaeosphaeriaceae</taxon>
        <taxon>Parastagonospora</taxon>
    </lineage>
</organism>
<accession>Q0UM32</accession>
<protein>
    <recommendedName>
        <fullName>Pre-rRNA-processing protein ESF2</fullName>
    </recommendedName>
    <alternativeName>
        <fullName>18S rRNA factor 2</fullName>
    </alternativeName>
</protein>
<comment type="function">
    <text evidence="1">Involved in the small subunit (SSU) processome assembly and function, and in the 18S rRNA synthesis. Required for the early cleavages at sites A0, A1 and A2 (By similarity).</text>
</comment>
<comment type="subcellular location">
    <subcellularLocation>
        <location evidence="1">Nucleus</location>
        <location evidence="1">Nucleolus</location>
    </subcellularLocation>
</comment>
<comment type="similarity">
    <text evidence="3">Belongs to the ESF2/ABP1 family.</text>
</comment>
<name>ESF2_PHANO</name>
<sequence length="326" mass="37027">MATRKRNEWLDAAESDDDERGYDSEEESRARMLPSAKRQKRDHDSEDEEDAEDQEEDVDQDDKEDDEDDEDDEDATDDIPKTAELAHLEKLAAGLPSNLKLQTTKLGKPVAPKKDKSGVIYLSRVPPFMKPTVLRSLLTPYGAVGKIFLTPEPAASRTQRLRGGGTRRKLFLDGWVEFLHKRDAKFVADNLNAQTMGGKKRGRWHDEVWNIKYLSGIKWNHLVETIQNENAERAARMRVEISRGKSENKAFLENLEMGKMIQGIEAKKKEKEDRGDDGEGMKAAEQVVEKKVKKPRREFVQHGVTSKGAKKPEPGQDVNRVLSSMM</sequence>